<reference key="1">
    <citation type="submission" date="2009-03" db="EMBL/GenBank/DDBJ databases">
        <title>Complete genome sequence of Edwardsiella ictaluri 93-146.</title>
        <authorList>
            <person name="Williams M.L."/>
            <person name="Gillaspy A.F."/>
            <person name="Dyer D.W."/>
            <person name="Thune R.L."/>
            <person name="Waldbieser G.C."/>
            <person name="Schuster S.C."/>
            <person name="Gipson J."/>
            <person name="Zaitshik J."/>
            <person name="Landry C."/>
            <person name="Lawrence M.L."/>
        </authorList>
    </citation>
    <scope>NUCLEOTIDE SEQUENCE [LARGE SCALE GENOMIC DNA]</scope>
    <source>
        <strain>93-146</strain>
    </source>
</reference>
<sequence>MTQTLTQLENSDAFIARHIGPTPEEQQQMLAQIGAADLDTLLARIVPADIQLPAAPPIGAACSEQQALDELRAIAAQNQCYRSFIGMGYYGVQTPPAIQRNMLENPGWYTAYTPYQPEVSQGRLEALLNFQQMTLDLTGLDLASASLLDEATAAAEAMGLARRASRLKQANTFFIAQDVHPQTIDVVCTRAQSCGVEVIIDDARRAADHRDLFGVLLQQVGTQGDLHDYRALMDSLRERGVITCMAADPLALVLLEAPGRQGADVVFGSAQRFGVPMGYGGPHAAFFACREAFKRAMPGRIIGVARDAAGEPALRMAMQTREQHIRREKANSNICTSQVLLANIAGMYAVYHGPQGLRRIAERVHRLADILALGLQQKGVTLRNHCWFDTLTVAVPDKGAVLARALGFGINLRGDLDGAVGISFDECSTRDDLEALFTILLGDGHALDIDTLDTLVQEACEGSIPAALLRREPILTHPVFNRYHSETALMRYMHALERRDLALNQAMIPLGSCTMKLNAAAEMIPITWPEFAALHPFCPPEQAQGYRLLLSQLAEWLVQLTGYDAVCLQPNSGAQGEYAGLLAIRRYHESRGEGQRTRCLIPASAHGTNPASAQMAGMEVEVVACDEQGNIDLHDLRERARQAGERLAAIMVTYPSTHGVYEETIREVCQIVHQYGGQVYLDGANMNAQVGITTPGYIGADVSHLNLHKTFAIPHGGGGPGMGPIGVKAHLAPFVPGHRVVQLAGLTTRQGAVSAAPFGSASILPISWMYIRMMGAEGLRRASTVAILNANYIARRLGAVYPVLYRGKEGYVAHECILDLRPLKARSGISEMDIAKRLIDYGFHAPTMSFPVAGTLMVEPTESENKAELDRFIAAMLAIHDEITRVETGEWPLQDNPLVNAPHTQRELVGEWHHPYGRELAVFPTPQTRENKYWPAVKRLDDVYGDRHLQCSCPPLSDWA</sequence>
<protein>
    <recommendedName>
        <fullName evidence="1">Glycine dehydrogenase (decarboxylating)</fullName>
        <ecNumber evidence="1">1.4.4.2</ecNumber>
    </recommendedName>
    <alternativeName>
        <fullName evidence="1">Glycine cleavage system P-protein</fullName>
    </alternativeName>
    <alternativeName>
        <fullName evidence="1">Glycine decarboxylase</fullName>
    </alternativeName>
    <alternativeName>
        <fullName evidence="1">Glycine dehydrogenase (aminomethyl-transferring)</fullName>
    </alternativeName>
</protein>
<dbReference type="EC" id="1.4.4.2" evidence="1"/>
<dbReference type="EMBL" id="CP001600">
    <property type="protein sequence ID" value="ACR70489.1"/>
    <property type="molecule type" value="Genomic_DNA"/>
</dbReference>
<dbReference type="RefSeq" id="WP_015872563.1">
    <property type="nucleotide sequence ID" value="NZ_CP169062.1"/>
</dbReference>
<dbReference type="SMR" id="C5BAT0"/>
<dbReference type="STRING" id="67780.B6E78_08440"/>
<dbReference type="GeneID" id="69540206"/>
<dbReference type="KEGG" id="eic:NT01EI_3351"/>
<dbReference type="PATRIC" id="fig|634503.3.peg.2978"/>
<dbReference type="HOGENOM" id="CLU_004620_1_1_6"/>
<dbReference type="OrthoDB" id="9801272at2"/>
<dbReference type="PHI-base" id="PHI:2961"/>
<dbReference type="Proteomes" id="UP000001485">
    <property type="component" value="Chromosome"/>
</dbReference>
<dbReference type="GO" id="GO:0005829">
    <property type="term" value="C:cytosol"/>
    <property type="evidence" value="ECO:0007669"/>
    <property type="project" value="TreeGrafter"/>
</dbReference>
<dbReference type="GO" id="GO:0005960">
    <property type="term" value="C:glycine cleavage complex"/>
    <property type="evidence" value="ECO:0007669"/>
    <property type="project" value="TreeGrafter"/>
</dbReference>
<dbReference type="GO" id="GO:0016594">
    <property type="term" value="F:glycine binding"/>
    <property type="evidence" value="ECO:0007669"/>
    <property type="project" value="TreeGrafter"/>
</dbReference>
<dbReference type="GO" id="GO:0004375">
    <property type="term" value="F:glycine dehydrogenase (decarboxylating) activity"/>
    <property type="evidence" value="ECO:0007669"/>
    <property type="project" value="UniProtKB-EC"/>
</dbReference>
<dbReference type="GO" id="GO:0030170">
    <property type="term" value="F:pyridoxal phosphate binding"/>
    <property type="evidence" value="ECO:0007669"/>
    <property type="project" value="TreeGrafter"/>
</dbReference>
<dbReference type="GO" id="GO:0019464">
    <property type="term" value="P:glycine decarboxylation via glycine cleavage system"/>
    <property type="evidence" value="ECO:0007669"/>
    <property type="project" value="UniProtKB-UniRule"/>
</dbReference>
<dbReference type="CDD" id="cd00613">
    <property type="entry name" value="GDC-P"/>
    <property type="match status" value="2"/>
</dbReference>
<dbReference type="FunFam" id="3.40.640.10:FF:000005">
    <property type="entry name" value="Glycine dehydrogenase (decarboxylating), mitochondrial"/>
    <property type="match status" value="1"/>
</dbReference>
<dbReference type="FunFam" id="3.90.1150.10:FF:000007">
    <property type="entry name" value="Glycine dehydrogenase (decarboxylating), mitochondrial"/>
    <property type="match status" value="1"/>
</dbReference>
<dbReference type="FunFam" id="3.40.640.10:FF:000007">
    <property type="entry name" value="glycine dehydrogenase (Decarboxylating), mitochondrial"/>
    <property type="match status" value="1"/>
</dbReference>
<dbReference type="Gene3D" id="3.90.1150.10">
    <property type="entry name" value="Aspartate Aminotransferase, domain 1"/>
    <property type="match status" value="2"/>
</dbReference>
<dbReference type="Gene3D" id="3.40.640.10">
    <property type="entry name" value="Type I PLP-dependent aspartate aminotransferase-like (Major domain)"/>
    <property type="match status" value="2"/>
</dbReference>
<dbReference type="HAMAP" id="MF_00711">
    <property type="entry name" value="GcvP"/>
    <property type="match status" value="1"/>
</dbReference>
<dbReference type="InterPro" id="IPR003437">
    <property type="entry name" value="GcvP"/>
</dbReference>
<dbReference type="InterPro" id="IPR049316">
    <property type="entry name" value="GDC-P_C"/>
</dbReference>
<dbReference type="InterPro" id="IPR049315">
    <property type="entry name" value="GDC-P_N"/>
</dbReference>
<dbReference type="InterPro" id="IPR020581">
    <property type="entry name" value="GDC_P"/>
</dbReference>
<dbReference type="InterPro" id="IPR015424">
    <property type="entry name" value="PyrdxlP-dep_Trfase"/>
</dbReference>
<dbReference type="InterPro" id="IPR015421">
    <property type="entry name" value="PyrdxlP-dep_Trfase_major"/>
</dbReference>
<dbReference type="InterPro" id="IPR015422">
    <property type="entry name" value="PyrdxlP-dep_Trfase_small"/>
</dbReference>
<dbReference type="NCBIfam" id="TIGR00461">
    <property type="entry name" value="gcvP"/>
    <property type="match status" value="1"/>
</dbReference>
<dbReference type="NCBIfam" id="NF003346">
    <property type="entry name" value="PRK04366.1"/>
    <property type="match status" value="1"/>
</dbReference>
<dbReference type="PANTHER" id="PTHR11773:SF13">
    <property type="entry name" value="GLYCINE DEHYDROGENASE (DECARBOXYLATING)"/>
    <property type="match status" value="1"/>
</dbReference>
<dbReference type="PANTHER" id="PTHR11773">
    <property type="entry name" value="GLYCINE DEHYDROGENASE, DECARBOXYLATING"/>
    <property type="match status" value="1"/>
</dbReference>
<dbReference type="Pfam" id="PF21478">
    <property type="entry name" value="GcvP2_C"/>
    <property type="match status" value="1"/>
</dbReference>
<dbReference type="Pfam" id="PF02347">
    <property type="entry name" value="GDC-P"/>
    <property type="match status" value="2"/>
</dbReference>
<dbReference type="SUPFAM" id="SSF53383">
    <property type="entry name" value="PLP-dependent transferases"/>
    <property type="match status" value="2"/>
</dbReference>
<proteinExistence type="inferred from homology"/>
<comment type="function">
    <text evidence="1">The glycine cleavage system catalyzes the degradation of glycine. The P protein binds the alpha-amino group of glycine through its pyridoxal phosphate cofactor; CO(2) is released and the remaining methylamine moiety is then transferred to the lipoamide cofactor of the H protein.</text>
</comment>
<comment type="catalytic activity">
    <reaction evidence="1">
        <text>N(6)-[(R)-lipoyl]-L-lysyl-[glycine-cleavage complex H protein] + glycine + H(+) = N(6)-[(R)-S(8)-aminomethyldihydrolipoyl]-L-lysyl-[glycine-cleavage complex H protein] + CO2</text>
        <dbReference type="Rhea" id="RHEA:24304"/>
        <dbReference type="Rhea" id="RHEA-COMP:10494"/>
        <dbReference type="Rhea" id="RHEA-COMP:10495"/>
        <dbReference type="ChEBI" id="CHEBI:15378"/>
        <dbReference type="ChEBI" id="CHEBI:16526"/>
        <dbReference type="ChEBI" id="CHEBI:57305"/>
        <dbReference type="ChEBI" id="CHEBI:83099"/>
        <dbReference type="ChEBI" id="CHEBI:83143"/>
        <dbReference type="EC" id="1.4.4.2"/>
    </reaction>
</comment>
<comment type="cofactor">
    <cofactor evidence="1">
        <name>pyridoxal 5'-phosphate</name>
        <dbReference type="ChEBI" id="CHEBI:597326"/>
    </cofactor>
</comment>
<comment type="subunit">
    <text evidence="1">The glycine cleavage system is composed of four proteins: P, T, L and H.</text>
</comment>
<comment type="similarity">
    <text evidence="1">Belongs to the GcvP family.</text>
</comment>
<evidence type="ECO:0000255" key="1">
    <source>
        <dbReference type="HAMAP-Rule" id="MF_00711"/>
    </source>
</evidence>
<feature type="chain" id="PRO_1000212654" description="Glycine dehydrogenase (decarboxylating)">
    <location>
        <begin position="1"/>
        <end position="960"/>
    </location>
</feature>
<feature type="modified residue" description="N6-(pyridoxal phosphate)lysine" evidence="1">
    <location>
        <position position="709"/>
    </location>
</feature>
<keyword id="KW-0560">Oxidoreductase</keyword>
<keyword id="KW-0663">Pyridoxal phosphate</keyword>
<name>GCSP_EDWI9</name>
<accession>C5BAT0</accession>
<gene>
    <name evidence="1" type="primary">gcvP</name>
    <name type="ordered locus">NT01EI_3351</name>
</gene>
<organism>
    <name type="scientific">Edwardsiella ictaluri (strain 93-146)</name>
    <dbReference type="NCBI Taxonomy" id="634503"/>
    <lineage>
        <taxon>Bacteria</taxon>
        <taxon>Pseudomonadati</taxon>
        <taxon>Pseudomonadota</taxon>
        <taxon>Gammaproteobacteria</taxon>
        <taxon>Enterobacterales</taxon>
        <taxon>Hafniaceae</taxon>
        <taxon>Edwardsiella</taxon>
    </lineage>
</organism>